<reference key="1">
    <citation type="journal article" date="1990" name="EMBO J.">
        <title>Primary structure, genomic organization and heterologous expression of a glucose transporter from Arabidopsis thaliana.</title>
        <authorList>
            <person name="Sauer N."/>
            <person name="Friedlaender K."/>
            <person name="Graeml-Wicke U."/>
        </authorList>
    </citation>
    <scope>NUCLEOTIDE SEQUENCE [MRNA]</scope>
    <scope>FUNCTION</scope>
    <scope>BIOPHYSICOCHEMICAL PROPERTIES</scope>
    <scope>TISSUE SPECIFICITY</scope>
    <source>
        <strain>cv. Landsberg erecta</strain>
    </source>
</reference>
<reference key="2">
    <citation type="journal article" date="2000" name="Nature">
        <title>Sequence and analysis of chromosome 1 of the plant Arabidopsis thaliana.</title>
        <authorList>
            <person name="Theologis A."/>
            <person name="Ecker J.R."/>
            <person name="Palm C.J."/>
            <person name="Federspiel N.A."/>
            <person name="Kaul S."/>
            <person name="White O."/>
            <person name="Alonso J."/>
            <person name="Altafi H."/>
            <person name="Araujo R."/>
            <person name="Bowman C.L."/>
            <person name="Brooks S.Y."/>
            <person name="Buehler E."/>
            <person name="Chan A."/>
            <person name="Chao Q."/>
            <person name="Chen H."/>
            <person name="Cheuk R.F."/>
            <person name="Chin C.W."/>
            <person name="Chung M.K."/>
            <person name="Conn L."/>
            <person name="Conway A.B."/>
            <person name="Conway A.R."/>
            <person name="Creasy T.H."/>
            <person name="Dewar K."/>
            <person name="Dunn P."/>
            <person name="Etgu P."/>
            <person name="Feldblyum T.V."/>
            <person name="Feng J.-D."/>
            <person name="Fong B."/>
            <person name="Fujii C.Y."/>
            <person name="Gill J.E."/>
            <person name="Goldsmith A.D."/>
            <person name="Haas B."/>
            <person name="Hansen N.F."/>
            <person name="Hughes B."/>
            <person name="Huizar L."/>
            <person name="Hunter J.L."/>
            <person name="Jenkins J."/>
            <person name="Johnson-Hopson C."/>
            <person name="Khan S."/>
            <person name="Khaykin E."/>
            <person name="Kim C.J."/>
            <person name="Koo H.L."/>
            <person name="Kremenetskaia I."/>
            <person name="Kurtz D.B."/>
            <person name="Kwan A."/>
            <person name="Lam B."/>
            <person name="Langin-Hooper S."/>
            <person name="Lee A."/>
            <person name="Lee J.M."/>
            <person name="Lenz C.A."/>
            <person name="Li J.H."/>
            <person name="Li Y.-P."/>
            <person name="Lin X."/>
            <person name="Liu S.X."/>
            <person name="Liu Z.A."/>
            <person name="Luros J.S."/>
            <person name="Maiti R."/>
            <person name="Marziali A."/>
            <person name="Militscher J."/>
            <person name="Miranda M."/>
            <person name="Nguyen M."/>
            <person name="Nierman W.C."/>
            <person name="Osborne B.I."/>
            <person name="Pai G."/>
            <person name="Peterson J."/>
            <person name="Pham P.K."/>
            <person name="Rizzo M."/>
            <person name="Rooney T."/>
            <person name="Rowley D."/>
            <person name="Sakano H."/>
            <person name="Salzberg S.L."/>
            <person name="Schwartz J.R."/>
            <person name="Shinn P."/>
            <person name="Southwick A.M."/>
            <person name="Sun H."/>
            <person name="Tallon L.J."/>
            <person name="Tambunga G."/>
            <person name="Toriumi M.J."/>
            <person name="Town C.D."/>
            <person name="Utterback T."/>
            <person name="Van Aken S."/>
            <person name="Vaysberg M."/>
            <person name="Vysotskaia V.S."/>
            <person name="Walker M."/>
            <person name="Wu D."/>
            <person name="Yu G."/>
            <person name="Fraser C.M."/>
            <person name="Venter J.C."/>
            <person name="Davis R.W."/>
        </authorList>
    </citation>
    <scope>NUCLEOTIDE SEQUENCE [LARGE SCALE GENOMIC DNA]</scope>
    <source>
        <strain>cv. Columbia</strain>
    </source>
</reference>
<reference key="3">
    <citation type="journal article" date="2017" name="Plant J.">
        <title>Araport11: a complete reannotation of the Arabidopsis thaliana reference genome.</title>
        <authorList>
            <person name="Cheng C.Y."/>
            <person name="Krishnakumar V."/>
            <person name="Chan A.P."/>
            <person name="Thibaud-Nissen F."/>
            <person name="Schobel S."/>
            <person name="Town C.D."/>
        </authorList>
    </citation>
    <scope>GENOME REANNOTATION</scope>
    <source>
        <strain>cv. Columbia</strain>
    </source>
</reference>
<reference key="4">
    <citation type="journal article" date="2003" name="Science">
        <title>Empirical analysis of transcriptional activity in the Arabidopsis genome.</title>
        <authorList>
            <person name="Yamada K."/>
            <person name="Lim J."/>
            <person name="Dale J.M."/>
            <person name="Chen H."/>
            <person name="Shinn P."/>
            <person name="Palm C.J."/>
            <person name="Southwick A.M."/>
            <person name="Wu H.C."/>
            <person name="Kim C.J."/>
            <person name="Nguyen M."/>
            <person name="Pham P.K."/>
            <person name="Cheuk R.F."/>
            <person name="Karlin-Newmann G."/>
            <person name="Liu S.X."/>
            <person name="Lam B."/>
            <person name="Sakano H."/>
            <person name="Wu T."/>
            <person name="Yu G."/>
            <person name="Miranda M."/>
            <person name="Quach H.L."/>
            <person name="Tripp M."/>
            <person name="Chang C.H."/>
            <person name="Lee J.M."/>
            <person name="Toriumi M.J."/>
            <person name="Chan M.M."/>
            <person name="Tang C.C."/>
            <person name="Onodera C.S."/>
            <person name="Deng J.M."/>
            <person name="Akiyama K."/>
            <person name="Ansari Y."/>
            <person name="Arakawa T."/>
            <person name="Banh J."/>
            <person name="Banno F."/>
            <person name="Bowser L."/>
            <person name="Brooks S.Y."/>
            <person name="Carninci P."/>
            <person name="Chao Q."/>
            <person name="Choy N."/>
            <person name="Enju A."/>
            <person name="Goldsmith A.D."/>
            <person name="Gurjal M."/>
            <person name="Hansen N.F."/>
            <person name="Hayashizaki Y."/>
            <person name="Johnson-Hopson C."/>
            <person name="Hsuan V.W."/>
            <person name="Iida K."/>
            <person name="Karnes M."/>
            <person name="Khan S."/>
            <person name="Koesema E."/>
            <person name="Ishida J."/>
            <person name="Jiang P.X."/>
            <person name="Jones T."/>
            <person name="Kawai J."/>
            <person name="Kamiya A."/>
            <person name="Meyers C."/>
            <person name="Nakajima M."/>
            <person name="Narusaka M."/>
            <person name="Seki M."/>
            <person name="Sakurai T."/>
            <person name="Satou M."/>
            <person name="Tamse R."/>
            <person name="Vaysberg M."/>
            <person name="Wallender E.K."/>
            <person name="Wong C."/>
            <person name="Yamamura Y."/>
            <person name="Yuan S."/>
            <person name="Shinozaki K."/>
            <person name="Davis R.W."/>
            <person name="Theologis A."/>
            <person name="Ecker J.R."/>
        </authorList>
    </citation>
    <scope>NUCLEOTIDE SEQUENCE [LARGE SCALE MRNA]</scope>
    <source>
        <strain>cv. Columbia</strain>
    </source>
</reference>
<reference key="5">
    <citation type="submission" date="2002-03" db="EMBL/GenBank/DDBJ databases">
        <title>Full-length cDNA from Arabidopsis thaliana.</title>
        <authorList>
            <person name="Brover V.V."/>
            <person name="Troukhan M.E."/>
            <person name="Alexandrov N.A."/>
            <person name="Lu Y.-P."/>
            <person name="Flavell R.B."/>
            <person name="Feldmann K.A."/>
        </authorList>
    </citation>
    <scope>NUCLEOTIDE SEQUENCE [LARGE SCALE MRNA]</scope>
</reference>
<reference key="6">
    <citation type="submission" date="1998-08" db="EMBL/GenBank/DDBJ databases">
        <title>Signal peptide selection derived cDNAs from Arabidopsis thaliana leaves and guard cells.</title>
        <authorList>
            <person name="Stracke R."/>
            <person name="Palme K."/>
        </authorList>
    </citation>
    <scope>NUCLEOTIDE SEQUENCE [LARGE SCALE MRNA] OF 1-194</scope>
</reference>
<reference key="7">
    <citation type="submission" date="2005-03" db="EMBL/GenBank/DDBJ databases">
        <title>Large-scale analysis of RIKEN Arabidopsis full-length (RAFL) cDNAs.</title>
        <authorList>
            <person name="Totoki Y."/>
            <person name="Seki M."/>
            <person name="Ishida J."/>
            <person name="Nakajima M."/>
            <person name="Enju A."/>
            <person name="Kamiya A."/>
            <person name="Narusaka M."/>
            <person name="Shin-i T."/>
            <person name="Nakagawa M."/>
            <person name="Sakamoto N."/>
            <person name="Oishi K."/>
            <person name="Kohara Y."/>
            <person name="Kobayashi M."/>
            <person name="Toyoda A."/>
            <person name="Sakaki Y."/>
            <person name="Sakurai T."/>
            <person name="Iida K."/>
            <person name="Akiyama K."/>
            <person name="Satou M."/>
            <person name="Toyoda T."/>
            <person name="Konagaya A."/>
            <person name="Carninci P."/>
            <person name="Kawai J."/>
            <person name="Hayashizaki Y."/>
            <person name="Shinozaki K."/>
        </authorList>
    </citation>
    <scope>NUCLEOTIDE SEQUENCE [LARGE SCALE MRNA] OF 429-522</scope>
    <source>
        <strain>cv. Columbia</strain>
    </source>
</reference>
<reference key="8">
    <citation type="journal article" date="1992" name="FEBS Lett.">
        <title>Functional expression of a plant plasma membrane transporter in Xenopus oocytes.</title>
        <authorList>
            <person name="Boorer K.J."/>
            <person name="Forde B.G."/>
            <person name="Leigh R.A."/>
            <person name="Miller A.J."/>
        </authorList>
    </citation>
    <scope>FUNCTION</scope>
</reference>
<reference key="9">
    <citation type="journal article" date="1994" name="J. Biol. Chem.">
        <title>Steady-state and presteady-state kinetics of the H(+)/hexose cotransporter (STP1) from Arabidopsis thaliana expressed in Xenopus oocytes.</title>
        <authorList>
            <person name="Boorer K.J."/>
            <person name="Loo D.D.F."/>
            <person name="Wright E.M."/>
        </authorList>
    </citation>
    <scope>FUNCTION</scope>
</reference>
<reference key="10">
    <citation type="journal article" date="1994" name="Plant J.">
        <title>Functional reconstitution of the solubilized Arabidopsis thaliana STP1 monosaccharide-H(+) symporter in lipid vesicles and purification of the histidine tagged protein from transgenic Saccharomyces cerevisiae.</title>
        <authorList>
            <person name="Stolz J."/>
            <person name="Stadler R."/>
            <person name="Opekarova M."/>
            <person name="Sauer N."/>
        </authorList>
    </citation>
    <scope>FUNCTION</scope>
    <scope>SUBCELLULAR LOCATION</scope>
</reference>
<reference key="11">
    <citation type="journal article" date="2000" name="Plant J.">
        <title>Monosaccharide/proton symporter AtSTP1 plays a major role in uptake and response of Arabidopsis seeds and seedlings to sugars.</title>
        <authorList>
            <person name="Sherson S.M."/>
            <person name="Hemmann G."/>
            <person name="Wallace G."/>
            <person name="Forbes S.M."/>
            <person name="Germain V."/>
            <person name="Stadler R."/>
            <person name="Bechtold N."/>
            <person name="Sauer N."/>
            <person name="Smith S.M."/>
        </authorList>
    </citation>
    <scope>FUNCTION</scope>
</reference>
<reference key="12">
    <citation type="journal article" date="2003" name="J. Exp. Bot.">
        <title>Roles of cell-wall invertases and monosaccharide transporters in the growth and development of Arabidopsis.</title>
        <authorList>
            <person name="Sherson S.M."/>
            <person name="Alford H.L."/>
            <person name="Forbes S.M."/>
            <person name="Wallace G."/>
            <person name="Smith S.M."/>
        </authorList>
    </citation>
    <scope>TISSUE SPECIFICITY</scope>
</reference>
<reference key="13">
    <citation type="journal article" date="2003" name="Plant Physiol.">
        <title>Diurnal and light-regulated expression of AtSTP1 in guard cells of Arabidopsis.</title>
        <authorList>
            <person name="Stadler R."/>
            <person name="Buettner M."/>
            <person name="Ache P."/>
            <person name="Hedrich R."/>
            <person name="Ivashikina N."/>
            <person name="Melzer M."/>
            <person name="Shearson S.M."/>
            <person name="Smith S.M."/>
            <person name="Sauer N."/>
        </authorList>
    </citation>
    <scope>TISSUE SPECIFICITY</scope>
    <scope>INDUCTION</scope>
</reference>
<reference key="14">
    <citation type="journal article" date="2004" name="Mol. Cell. Proteomics">
        <title>Identification of new intrinsic proteins in Arabidopsis plasma membrane proteome.</title>
        <authorList>
            <person name="Marmagne A."/>
            <person name="Rouet M.-A."/>
            <person name="Ferro M."/>
            <person name="Rolland N."/>
            <person name="Alcon C."/>
            <person name="Joyard J."/>
            <person name="Garin J."/>
            <person name="Barbier-Brygoo H."/>
            <person name="Ephritikhine G."/>
        </authorList>
    </citation>
    <scope>IDENTIFICATION BY MASS SPECTROMETRY</scope>
    <scope>SUBCELLULAR LOCATION [LARGE SCALE ANALYSIS]</scope>
</reference>
<reference key="15">
    <citation type="journal article" date="2004" name="Plant Cell">
        <title>Phosphoproteomics of the Arabidopsis plasma membrane and a new phosphorylation site database.</title>
        <authorList>
            <person name="Nuehse T.S."/>
            <person name="Stensballe A."/>
            <person name="Jensen O.N."/>
            <person name="Peck S.C."/>
        </authorList>
    </citation>
    <scope>SUBCELLULAR LOCATION</scope>
    <scope>PHOSPHORYLATION [LARGE SCALE ANALYSIS] AT SER-252</scope>
    <scope>IDENTIFICATION BY MASS SPECTROMETRY [LARGE SCALE ANALYSIS]</scope>
</reference>
<reference key="16">
    <citation type="journal article" date="2006" name="BMC Evol. Biol.">
        <title>The monosaccharide transporter gene family in land plants is ancient and shows differential subfamily expression and expansion across lineages.</title>
        <authorList>
            <person name="Johnson D.A."/>
            <person name="Hill J.P."/>
            <person name="Thomas M.A."/>
        </authorList>
    </citation>
    <scope>GENE FAMILY</scope>
</reference>
<reference key="17">
    <citation type="journal article" date="2007" name="Biochem. Biophys. Res. Commun.">
        <title>Novel subsets of the Arabidopsis plasmalemma phosphoproteome identify phosphorylation sites in secondary active transporters.</title>
        <authorList>
            <person name="Hem S."/>
            <person name="Rofidal V."/>
            <person name="Sommerer N."/>
            <person name="Rossignol M."/>
        </authorList>
    </citation>
    <scope>PHOSPHORYLATION [LARGE SCALE ANALYSIS] AT SER-252</scope>
    <scope>IDENTIFICATION BY MASS SPECTROMETRY [LARGE SCALE ANALYSIS]</scope>
</reference>
<reference key="18">
    <citation type="journal article" date="2008" name="J. Proteome Res.">
        <title>Site-specific phosphorylation profiling of Arabidopsis proteins by mass spectrometry and peptide chip analysis.</title>
        <authorList>
            <person name="de la Fuente van Bentem S."/>
            <person name="Anrather D."/>
            <person name="Dohnal I."/>
            <person name="Roitinger E."/>
            <person name="Csaszar E."/>
            <person name="Joore J."/>
            <person name="Buijnink J."/>
            <person name="Carreri A."/>
            <person name="Forzani C."/>
            <person name="Lorkovic Z.J."/>
            <person name="Barta A."/>
            <person name="Lecourieux D."/>
            <person name="Verhounig A."/>
            <person name="Jonak C."/>
            <person name="Hirt H."/>
        </authorList>
    </citation>
    <scope>PHOSPHORYLATION [LARGE SCALE ANALYSIS] AT SER-252</scope>
    <scope>IDENTIFICATION BY MASS SPECTROMETRY [LARGE SCALE ANALYSIS]</scope>
    <source>
        <tissue>Root</tissue>
    </source>
</reference>
<reference key="19">
    <citation type="journal article" date="2009" name="J. Proteomics">
        <title>Phosphoproteomic analysis of nuclei-enriched fractions from Arabidopsis thaliana.</title>
        <authorList>
            <person name="Jones A.M.E."/>
            <person name="MacLean D."/>
            <person name="Studholme D.J."/>
            <person name="Serna-Sanz A."/>
            <person name="Andreasson E."/>
            <person name="Rathjen J.P."/>
            <person name="Peck S.C."/>
        </authorList>
    </citation>
    <scope>PHOSPHORYLATION [LARGE SCALE ANALYSIS] AT SER-252</scope>
    <scope>IDENTIFICATION BY MASS SPECTROMETRY [LARGE SCALE ANALYSIS]</scope>
    <source>
        <strain>cv. Columbia</strain>
    </source>
</reference>
<name>STP1_ARATH</name>
<protein>
    <recommendedName>
        <fullName>Sugar transport protein 1</fullName>
    </recommendedName>
    <alternativeName>
        <fullName>Glucose transporter</fullName>
    </alternativeName>
    <alternativeName>
        <fullName>Hexose transporter 1</fullName>
    </alternativeName>
</protein>
<proteinExistence type="evidence at protein level"/>
<accession>P23586</accession>
<accession>Q56Z12</accession>
<accession>Q8H775</accession>
<accession>Q8LBC8</accession>
<accession>Q9SXB1</accession>
<feature type="chain" id="PRO_0000050431" description="Sugar transport protein 1">
    <location>
        <begin position="1"/>
        <end position="522"/>
    </location>
</feature>
<feature type="topological domain" description="Cytoplasmic" evidence="1">
    <location>
        <begin position="1"/>
        <end position="22"/>
    </location>
</feature>
<feature type="transmembrane region" description="Helical; Name=1" evidence="1">
    <location>
        <begin position="23"/>
        <end position="43"/>
    </location>
</feature>
<feature type="topological domain" description="Extracellular" evidence="1">
    <location>
        <begin position="44"/>
        <end position="79"/>
    </location>
</feature>
<feature type="transmembrane region" description="Helical; Name=2" evidence="1">
    <location>
        <begin position="80"/>
        <end position="100"/>
    </location>
</feature>
<feature type="topological domain" description="Cytoplasmic" evidence="1">
    <location>
        <begin position="101"/>
        <end position="117"/>
    </location>
</feature>
<feature type="transmembrane region" description="Helical; Name=3" evidence="1">
    <location>
        <begin position="118"/>
        <end position="138"/>
    </location>
</feature>
<feature type="topological domain" description="Extracellular" evidence="1">
    <location>
        <begin position="139"/>
        <end position="140"/>
    </location>
</feature>
<feature type="transmembrane region" description="Helical; Name=4" evidence="1">
    <location>
        <begin position="141"/>
        <end position="161"/>
    </location>
</feature>
<feature type="topological domain" description="Cytoplasmic" evidence="1">
    <location>
        <begin position="162"/>
        <end position="171"/>
    </location>
</feature>
<feature type="transmembrane region" description="Helical; Name=5" evidence="1">
    <location>
        <begin position="172"/>
        <end position="192"/>
    </location>
</feature>
<feature type="topological domain" description="Extracellular" evidence="1">
    <location>
        <begin position="193"/>
        <end position="202"/>
    </location>
</feature>
<feature type="transmembrane region" description="Helical; Name=6" evidence="1">
    <location>
        <begin position="203"/>
        <end position="223"/>
    </location>
</feature>
<feature type="topological domain" description="Cytoplasmic" evidence="1">
    <location>
        <begin position="224"/>
        <end position="289"/>
    </location>
</feature>
<feature type="transmembrane region" description="Helical; Name=7" evidence="1">
    <location>
        <begin position="290"/>
        <end position="310"/>
    </location>
</feature>
<feature type="topological domain" description="Extracellular" evidence="1">
    <location>
        <begin position="311"/>
        <end position="321"/>
    </location>
</feature>
<feature type="transmembrane region" description="Helical; Name=8" evidence="1">
    <location>
        <begin position="322"/>
        <end position="342"/>
    </location>
</feature>
<feature type="topological domain" description="Cytoplasmic" evidence="1">
    <location>
        <begin position="343"/>
        <end position="348"/>
    </location>
</feature>
<feature type="transmembrane region" description="Helical; Name=9" evidence="1">
    <location>
        <begin position="349"/>
        <end position="369"/>
    </location>
</feature>
<feature type="topological domain" description="Extracellular" evidence="1">
    <location>
        <begin position="370"/>
        <end position="384"/>
    </location>
</feature>
<feature type="transmembrane region" description="Helical; Name=10" evidence="1">
    <location>
        <begin position="385"/>
        <end position="405"/>
    </location>
</feature>
<feature type="topological domain" description="Cytoplasmic" evidence="1">
    <location>
        <begin position="406"/>
        <end position="427"/>
    </location>
</feature>
<feature type="transmembrane region" description="Helical; Name=11" evidence="1">
    <location>
        <begin position="428"/>
        <end position="448"/>
    </location>
</feature>
<feature type="topological domain" description="Extracellular" evidence="1">
    <location>
        <begin position="449"/>
        <end position="452"/>
    </location>
</feature>
<feature type="transmembrane region" description="Helical; Name=12" evidence="1">
    <location>
        <begin position="453"/>
        <end position="473"/>
    </location>
</feature>
<feature type="topological domain" description="Cytoplasmic" evidence="1">
    <location>
        <begin position="474"/>
        <end position="522"/>
    </location>
</feature>
<feature type="modified residue" description="Phosphoserine" evidence="13 14 15 16">
    <location>
        <position position="252"/>
    </location>
</feature>
<feature type="sequence conflict" description="In Ref. 1; CAA39037." evidence="10" ref="1">
    <original>A</original>
    <variation>G</variation>
    <location>
        <position position="333"/>
    </location>
</feature>
<feature type="sequence conflict" description="In Ref. 7." evidence="10" ref="7">
    <original>S</original>
    <variation>F</variation>
    <location>
        <position position="431"/>
    </location>
</feature>
<feature type="sequence conflict" description="In Ref. 5; AAM67326." evidence="10" ref="5">
    <original>V</original>
    <variation>E</variation>
    <location>
        <position position="470"/>
    </location>
</feature>
<dbReference type="EMBL" id="X55350">
    <property type="protein sequence ID" value="CAA39037.1"/>
    <property type="molecule type" value="mRNA"/>
</dbReference>
<dbReference type="EMBL" id="AC007259">
    <property type="protein sequence ID" value="AAD49995.1"/>
    <property type="molecule type" value="Genomic_DNA"/>
</dbReference>
<dbReference type="EMBL" id="CP002684">
    <property type="protein sequence ID" value="AEE28705.1"/>
    <property type="molecule type" value="Genomic_DNA"/>
</dbReference>
<dbReference type="EMBL" id="AY059781">
    <property type="protein sequence ID" value="AAL24129.1"/>
    <property type="molecule type" value="mRNA"/>
</dbReference>
<dbReference type="EMBL" id="AY054249">
    <property type="protein sequence ID" value="AAL06908.1"/>
    <property type="molecule type" value="mRNA"/>
</dbReference>
<dbReference type="EMBL" id="AY133845">
    <property type="protein sequence ID" value="AAM91779.1"/>
    <property type="molecule type" value="mRNA"/>
</dbReference>
<dbReference type="EMBL" id="AY087292">
    <property type="protein sequence ID" value="AAM67326.1"/>
    <property type="molecule type" value="mRNA"/>
</dbReference>
<dbReference type="EMBL" id="AF083803">
    <property type="protein sequence ID" value="AAN60361.1"/>
    <property type="molecule type" value="mRNA"/>
</dbReference>
<dbReference type="EMBL" id="AK221157">
    <property type="protein sequence ID" value="BAD95185.1"/>
    <property type="status" value="ALT_INIT"/>
    <property type="molecule type" value="mRNA"/>
</dbReference>
<dbReference type="PIR" id="E86246">
    <property type="entry name" value="E86246"/>
</dbReference>
<dbReference type="PIR" id="S12042">
    <property type="entry name" value="S12042"/>
</dbReference>
<dbReference type="RefSeq" id="NP_172592.1">
    <property type="nucleotide sequence ID" value="NM_100998.4"/>
</dbReference>
<dbReference type="SMR" id="P23586"/>
<dbReference type="BioGRID" id="22907">
    <property type="interactions" value="7"/>
</dbReference>
<dbReference type="FunCoup" id="P23586">
    <property type="interactions" value="199"/>
</dbReference>
<dbReference type="IntAct" id="P23586">
    <property type="interactions" value="1"/>
</dbReference>
<dbReference type="STRING" id="3702.P23586"/>
<dbReference type="TCDB" id="2.A.1.1.60">
    <property type="family name" value="the major facilitator superfamily (mfs)"/>
</dbReference>
<dbReference type="GlyGen" id="P23586">
    <property type="glycosylation" value="1 site"/>
</dbReference>
<dbReference type="iPTMnet" id="P23586"/>
<dbReference type="PaxDb" id="3702-AT1G11260.1"/>
<dbReference type="ProteomicsDB" id="228428"/>
<dbReference type="EnsemblPlants" id="AT1G11260.1">
    <property type="protein sequence ID" value="AT1G11260.1"/>
    <property type="gene ID" value="AT1G11260"/>
</dbReference>
<dbReference type="GeneID" id="837667"/>
<dbReference type="Gramene" id="AT1G11260.1">
    <property type="protein sequence ID" value="AT1G11260.1"/>
    <property type="gene ID" value="AT1G11260"/>
</dbReference>
<dbReference type="KEGG" id="ath:AT1G11260"/>
<dbReference type="Araport" id="AT1G11260"/>
<dbReference type="TAIR" id="AT1G11260">
    <property type="gene designation" value="STP1"/>
</dbReference>
<dbReference type="eggNOG" id="KOG0254">
    <property type="taxonomic scope" value="Eukaryota"/>
</dbReference>
<dbReference type="HOGENOM" id="CLU_001265_30_5_1"/>
<dbReference type="InParanoid" id="P23586"/>
<dbReference type="OMA" id="IYYFGTL"/>
<dbReference type="OrthoDB" id="5296287at2759"/>
<dbReference type="PhylomeDB" id="P23586"/>
<dbReference type="CD-CODE" id="4299E36E">
    <property type="entry name" value="Nucleolus"/>
</dbReference>
<dbReference type="PRO" id="PR:P23586"/>
<dbReference type="Proteomes" id="UP000006548">
    <property type="component" value="Chromosome 1"/>
</dbReference>
<dbReference type="ExpressionAtlas" id="P23586">
    <property type="expression patterns" value="baseline and differential"/>
</dbReference>
<dbReference type="GO" id="GO:0005576">
    <property type="term" value="C:extracellular region"/>
    <property type="evidence" value="ECO:0007005"/>
    <property type="project" value="TAIR"/>
</dbReference>
<dbReference type="GO" id="GO:0000325">
    <property type="term" value="C:plant-type vacuole"/>
    <property type="evidence" value="ECO:0007005"/>
    <property type="project" value="TAIR"/>
</dbReference>
<dbReference type="GO" id="GO:0005886">
    <property type="term" value="C:plasma membrane"/>
    <property type="evidence" value="ECO:0000314"/>
    <property type="project" value="TAIR"/>
</dbReference>
<dbReference type="GO" id="GO:0009506">
    <property type="term" value="C:plasmodesma"/>
    <property type="evidence" value="ECO:0007005"/>
    <property type="project" value="TAIR"/>
</dbReference>
<dbReference type="GO" id="GO:0015145">
    <property type="term" value="F:monosaccharide transmembrane transporter activity"/>
    <property type="evidence" value="ECO:0000315"/>
    <property type="project" value="TAIR"/>
</dbReference>
<dbReference type="GO" id="GO:0015293">
    <property type="term" value="F:symporter activity"/>
    <property type="evidence" value="ECO:0007669"/>
    <property type="project" value="UniProtKB-KW"/>
</dbReference>
<dbReference type="GO" id="GO:0015749">
    <property type="term" value="P:monosaccharide transmembrane transport"/>
    <property type="evidence" value="ECO:0000315"/>
    <property type="project" value="TAIR"/>
</dbReference>
<dbReference type="CDD" id="cd17361">
    <property type="entry name" value="MFS_STP"/>
    <property type="match status" value="1"/>
</dbReference>
<dbReference type="FunFam" id="1.20.1250.20:FF:000002">
    <property type="entry name" value="Sugar transport protein 13"/>
    <property type="match status" value="1"/>
</dbReference>
<dbReference type="Gene3D" id="1.20.1250.20">
    <property type="entry name" value="MFS general substrate transporter like domains"/>
    <property type="match status" value="1"/>
</dbReference>
<dbReference type="InterPro" id="IPR020846">
    <property type="entry name" value="MFS_dom"/>
</dbReference>
<dbReference type="InterPro" id="IPR044778">
    <property type="entry name" value="MFS_STP/MST-like_plant"/>
</dbReference>
<dbReference type="InterPro" id="IPR005828">
    <property type="entry name" value="MFS_sugar_transport-like"/>
</dbReference>
<dbReference type="InterPro" id="IPR036259">
    <property type="entry name" value="MFS_trans_sf"/>
</dbReference>
<dbReference type="InterPro" id="IPR045262">
    <property type="entry name" value="STP/PLT_plant"/>
</dbReference>
<dbReference type="InterPro" id="IPR003663">
    <property type="entry name" value="Sugar/inositol_transpt"/>
</dbReference>
<dbReference type="InterPro" id="IPR005829">
    <property type="entry name" value="Sugar_transporter_CS"/>
</dbReference>
<dbReference type="NCBIfam" id="TIGR00879">
    <property type="entry name" value="SP"/>
    <property type="match status" value="1"/>
</dbReference>
<dbReference type="PANTHER" id="PTHR23500">
    <property type="entry name" value="SOLUTE CARRIER FAMILY 2, FACILITATED GLUCOSE TRANSPORTER"/>
    <property type="match status" value="1"/>
</dbReference>
<dbReference type="PANTHER" id="PTHR23500:SF574">
    <property type="entry name" value="SUGAR TRANSPORT PROTEIN 1"/>
    <property type="match status" value="1"/>
</dbReference>
<dbReference type="Pfam" id="PF00083">
    <property type="entry name" value="Sugar_tr"/>
    <property type="match status" value="1"/>
</dbReference>
<dbReference type="PRINTS" id="PR00171">
    <property type="entry name" value="SUGRTRNSPORT"/>
</dbReference>
<dbReference type="SUPFAM" id="SSF103473">
    <property type="entry name" value="MFS general substrate transporter"/>
    <property type="match status" value="1"/>
</dbReference>
<dbReference type="PROSITE" id="PS50850">
    <property type="entry name" value="MFS"/>
    <property type="match status" value="1"/>
</dbReference>
<dbReference type="PROSITE" id="PS00216">
    <property type="entry name" value="SUGAR_TRANSPORT_1"/>
    <property type="match status" value="1"/>
</dbReference>
<dbReference type="PROSITE" id="PS00217">
    <property type="entry name" value="SUGAR_TRANSPORT_2"/>
    <property type="match status" value="1"/>
</dbReference>
<comment type="function">
    <text evidence="2 6 7 8 9">Major hexose transporter. Mediates an active uptake of hexoses, by sugar/hydrogen symport. Can transport glucose, 3-O-methylglucose, fructose, xylose, mannose, galactose, fucose, 2-deoxyglucose and arabinose. Confers sensitivity to galactose in seedlings.</text>
</comment>
<comment type="biophysicochemical properties">
    <kinetics>
        <KM evidence="7">20 uM for glucose (at pH 6.0 and 32 degrees Celsius)</KM>
        <KM evidence="7">100 uM for 3-O-methylglucose (at pH 6.0 and 32 degrees Celsius)</KM>
    </kinetics>
</comment>
<comment type="subcellular location">
    <subcellularLocation>
        <location evidence="5 11 12">Cell membrane</location>
        <topology evidence="11 12">Multi-pass membrane protein</topology>
    </subcellularLocation>
</comment>
<comment type="tissue specificity">
    <text evidence="3 4 7">Mostly expressed in young leaves, especially in guard cells (at protein level). Also present in roots.</text>
</comment>
<comment type="induction">
    <text evidence="4">Strong increase at the onset of the dark period followed by a progressive decrease. Transient increase at midday.</text>
</comment>
<comment type="similarity">
    <text evidence="10">Belongs to the major facilitator superfamily. Sugar transporter (TC 2.A.1.1) family.</text>
</comment>
<comment type="sequence caution" evidence="10">
    <conflict type="erroneous initiation">
        <sequence resource="EMBL-CDS" id="BAD95185"/>
    </conflict>
</comment>
<keyword id="KW-1003">Cell membrane</keyword>
<keyword id="KW-0472">Membrane</keyword>
<keyword id="KW-0597">Phosphoprotein</keyword>
<keyword id="KW-1185">Reference proteome</keyword>
<keyword id="KW-0762">Sugar transport</keyword>
<keyword id="KW-0769">Symport</keyword>
<keyword id="KW-0812">Transmembrane</keyword>
<keyword id="KW-1133">Transmembrane helix</keyword>
<keyword id="KW-0813">Transport</keyword>
<organism>
    <name type="scientific">Arabidopsis thaliana</name>
    <name type="common">Mouse-ear cress</name>
    <dbReference type="NCBI Taxonomy" id="3702"/>
    <lineage>
        <taxon>Eukaryota</taxon>
        <taxon>Viridiplantae</taxon>
        <taxon>Streptophyta</taxon>
        <taxon>Embryophyta</taxon>
        <taxon>Tracheophyta</taxon>
        <taxon>Spermatophyta</taxon>
        <taxon>Magnoliopsida</taxon>
        <taxon>eudicotyledons</taxon>
        <taxon>Gunneridae</taxon>
        <taxon>Pentapetalae</taxon>
        <taxon>rosids</taxon>
        <taxon>malvids</taxon>
        <taxon>Brassicales</taxon>
        <taxon>Brassicaceae</taxon>
        <taxon>Camelineae</taxon>
        <taxon>Arabidopsis</taxon>
    </lineage>
</organism>
<sequence>MPAGGFVVGDGQKAYPGKLTPFVLFTCVVAAMGGLIFGYDIGISGGVTSMPSFLKRFFPSVYRKQQEDASTNQYCQYDSPTLTMFTSSLYLAALISSLVASTVTRKFGRRLSMLFGGILFCAGALINGFAKHVWMLIVGRILLGFGIGFANQAVPLYLSEMAPYKYRGALNIGFQLSITIGILVAEVLNYFFAKIKGGWGWRLSLGGAVVPALIITIGSLVLPDTPNSMIERGQHEEAKTKLRRIRGVDDVSQEFDDLVAASKESQSIEHPWRNLLRRKYRPHLTMAVMIPFFQQLTGINVIMFYAPVLFNTIGFTTDASLMSAVVTGSVNVAATLVSIYGVDRWGRRFLFLEGGTQMLICQAVVAACIGAKFGVDGTPGELPKWYAIVVVTFICIYVAGFAWSWGPLGWLVPSEIFPLEIRSAAQSITVSVNMIFTFIIAQIFLTMLCHLKFGLFLVFAFFVVVMSIFVYIFLPETKGIPIEEMGQVWRSHWYWSRFVEDGEYGNALEMGKNSNQAGTKHV</sequence>
<evidence type="ECO:0000255" key="1"/>
<evidence type="ECO:0000269" key="2">
    <source>
    </source>
</evidence>
<evidence type="ECO:0000269" key="3">
    <source>
    </source>
</evidence>
<evidence type="ECO:0000269" key="4">
    <source>
    </source>
</evidence>
<evidence type="ECO:0000269" key="5">
    <source>
    </source>
</evidence>
<evidence type="ECO:0000269" key="6">
    <source>
    </source>
</evidence>
<evidence type="ECO:0000269" key="7">
    <source>
    </source>
</evidence>
<evidence type="ECO:0000269" key="8">
    <source>
    </source>
</evidence>
<evidence type="ECO:0000269" key="9">
    <source>
    </source>
</evidence>
<evidence type="ECO:0000305" key="10"/>
<evidence type="ECO:0000305" key="11">
    <source>
    </source>
</evidence>
<evidence type="ECO:0000305" key="12">
    <source>
    </source>
</evidence>
<evidence type="ECO:0007744" key="13">
    <source>
    </source>
</evidence>
<evidence type="ECO:0007744" key="14">
    <source>
    </source>
</evidence>
<evidence type="ECO:0007744" key="15">
    <source>
    </source>
</evidence>
<evidence type="ECO:0007744" key="16">
    <source>
    </source>
</evidence>
<gene>
    <name type="primary">STP1</name>
    <name type="ordered locus">At1g11260</name>
    <name type="ORF">T28P6.9</name>
</gene>